<proteinExistence type="evidence at protein level"/>
<accession>Q59544</accession>
<reference key="1">
    <citation type="journal article" date="1995" name="Microbiology">
        <title>Cloning and characterization of the NapA acid phosphatase/phosphotransferase of Morganella morganii: identification of a new family of bacterial acid-phosphatase-encoding genes.</title>
        <authorList>
            <person name="Thaller M.C."/>
            <person name="Lombardi G."/>
            <person name="Berlutti F."/>
            <person name="Schippa S."/>
            <person name="Rossolini G.M."/>
        </authorList>
    </citation>
    <scope>NUCLEOTIDE SEQUENCE [GENOMIC DNA]</scope>
    <scope>PROTEIN SEQUENCE OF 24-43</scope>
    <scope>FUNCTION</scope>
    <scope>CATALYTIC ACTIVITY</scope>
    <scope>ACTIVITY REGULATION</scope>
    <scope>BIOPHYSICOCHEMICAL PROPERTIES</scope>
    <scope>SUBSTRATE SPECIFICITY</scope>
    <scope>SUBCELLULAR LOCATION</scope>
    <scope>SUBUNIT</scope>
    <source>
        <strain>RS12</strain>
    </source>
</reference>
<gene>
    <name type="primary">aphA</name>
    <name type="synonym">napA</name>
</gene>
<sequence length="236" mass="26683">MRKLTLTLSALALALSLNSVADAKVYMPEKVSDGVTVAQLAEQHAIHWISVEQIEESLKGQPMAVGFDIDDTVLFSSPGFYRGKLEYSPNDYSYLKNPEFWEKMNNEWDKFSMPKKSGMELVQMHLKRGDTVYFITGRSKTKTETVTKYVQEGLRIPADKMNPVIFAGDEEGQNNKVSWMRDHKLKIYYGDADADIAAARELNIRGIRVLRASNSSYQPLPKAGQFGEEVVINSEY</sequence>
<feature type="signal peptide" evidence="2">
    <location>
        <begin position="1"/>
        <end position="23"/>
    </location>
</feature>
<feature type="chain" id="PRO_0000024006" description="Class B acid phosphatase">
    <location>
        <begin position="24"/>
        <end position="236"/>
    </location>
</feature>
<feature type="active site" description="Nucleophile" evidence="1">
    <location>
        <position position="68"/>
    </location>
</feature>
<feature type="active site" description="Proton donor" evidence="1">
    <location>
        <position position="70"/>
    </location>
</feature>
<feature type="binding site" evidence="1">
    <location>
        <position position="68"/>
    </location>
    <ligand>
        <name>Mg(2+)</name>
        <dbReference type="ChEBI" id="CHEBI:18420"/>
    </ligand>
</feature>
<feature type="binding site" evidence="1">
    <location>
        <position position="70"/>
    </location>
    <ligand>
        <name>Mg(2+)</name>
        <dbReference type="ChEBI" id="CHEBI:18420"/>
    </ligand>
</feature>
<feature type="binding site" evidence="1">
    <location>
        <begin position="136"/>
        <end position="137"/>
    </location>
    <ligand>
        <name>substrate</name>
    </ligand>
</feature>
<feature type="binding site" evidence="1">
    <location>
        <position position="176"/>
    </location>
    <ligand>
        <name>substrate</name>
    </ligand>
</feature>
<feature type="binding site" evidence="1">
    <location>
        <position position="191"/>
    </location>
    <ligand>
        <name>Mg(2+)</name>
        <dbReference type="ChEBI" id="CHEBI:18420"/>
    </ligand>
</feature>
<dbReference type="EC" id="3.1.3.2" evidence="2"/>
<dbReference type="EMBL" id="X78328">
    <property type="protein sequence ID" value="CAA55131.1"/>
    <property type="molecule type" value="Genomic_DNA"/>
</dbReference>
<dbReference type="SMR" id="Q59544"/>
<dbReference type="STRING" id="582.AL531_02900"/>
<dbReference type="GO" id="GO:0030288">
    <property type="term" value="C:outer membrane-bounded periplasmic space"/>
    <property type="evidence" value="ECO:0007669"/>
    <property type="project" value="InterPro"/>
</dbReference>
<dbReference type="GO" id="GO:0003993">
    <property type="term" value="F:acid phosphatase activity"/>
    <property type="evidence" value="ECO:0007669"/>
    <property type="project" value="UniProtKB-EC"/>
</dbReference>
<dbReference type="GO" id="GO:0046872">
    <property type="term" value="F:metal ion binding"/>
    <property type="evidence" value="ECO:0007669"/>
    <property type="project" value="UniProtKB-KW"/>
</dbReference>
<dbReference type="Gene3D" id="3.40.50.1000">
    <property type="entry name" value="HAD superfamily/HAD-like"/>
    <property type="match status" value="1"/>
</dbReference>
<dbReference type="InterPro" id="IPR005519">
    <property type="entry name" value="Acid_phosphat_B-like"/>
</dbReference>
<dbReference type="InterPro" id="IPR036412">
    <property type="entry name" value="HAD-like_sf"/>
</dbReference>
<dbReference type="InterPro" id="IPR010025">
    <property type="entry name" value="HAD-SF_ppase_IIIB_AphA"/>
</dbReference>
<dbReference type="InterPro" id="IPR023214">
    <property type="entry name" value="HAD_sf"/>
</dbReference>
<dbReference type="NCBIfam" id="TIGR01672">
    <property type="entry name" value="AphA"/>
    <property type="match status" value="1"/>
</dbReference>
<dbReference type="Pfam" id="PF03767">
    <property type="entry name" value="Acid_phosphat_B"/>
    <property type="match status" value="1"/>
</dbReference>
<dbReference type="PIRSF" id="PIRSF017818">
    <property type="entry name" value="Acid_Ptase_B"/>
    <property type="match status" value="1"/>
</dbReference>
<dbReference type="SFLD" id="SFLDG01127">
    <property type="entry name" value="C1.3:_Acid_Phosphatase_Like"/>
    <property type="match status" value="1"/>
</dbReference>
<dbReference type="SFLD" id="SFLDS00003">
    <property type="entry name" value="Haloacid_Dehalogenase"/>
    <property type="match status" value="1"/>
</dbReference>
<dbReference type="SUPFAM" id="SSF56784">
    <property type="entry name" value="HAD-like"/>
    <property type="match status" value="1"/>
</dbReference>
<evidence type="ECO:0000250" key="1">
    <source>
        <dbReference type="UniProtKB" id="Q540U1"/>
    </source>
</evidence>
<evidence type="ECO:0000269" key="2">
    <source>
    </source>
</evidence>
<evidence type="ECO:0000305" key="3"/>
<organism>
    <name type="scientific">Morganella morganii</name>
    <name type="common">Proteus morganii</name>
    <dbReference type="NCBI Taxonomy" id="582"/>
    <lineage>
        <taxon>Bacteria</taxon>
        <taxon>Pseudomonadati</taxon>
        <taxon>Pseudomonadota</taxon>
        <taxon>Gammaproteobacteria</taxon>
        <taxon>Enterobacterales</taxon>
        <taxon>Morganellaceae</taxon>
        <taxon>Morganella</taxon>
    </lineage>
</organism>
<protein>
    <recommendedName>
        <fullName>Class B acid phosphatase</fullName>
        <shortName>CBAP</shortName>
        <ecNumber evidence="2">3.1.3.2</ecNumber>
    </recommendedName>
    <alternativeName>
        <fullName>Minor phosphate-irrepressible acid phosphatase</fullName>
    </alternativeName>
</protein>
<name>APHA_MORMO</name>
<comment type="function">
    <text evidence="2">Dephosphorylates several organic phosphate monoesters including 5'-AMP, 3'-AMP, pNPP, PDP, 5'-UMP, 3'-UMP, G2P, glucose 6-P and ribose 5-P. No activity toward organic phosphate diesters. Also has a phosphotransferase activity catalyzing the transfer of low-energy phosphate groups from organic phosphate monoesters to free hydroxyl groups of various organic compounds.</text>
</comment>
<comment type="catalytic activity">
    <reaction evidence="2">
        <text>a phosphate monoester + H2O = an alcohol + phosphate</text>
        <dbReference type="Rhea" id="RHEA:15017"/>
        <dbReference type="ChEBI" id="CHEBI:15377"/>
        <dbReference type="ChEBI" id="CHEBI:30879"/>
        <dbReference type="ChEBI" id="CHEBI:43474"/>
        <dbReference type="ChEBI" id="CHEBI:67140"/>
        <dbReference type="EC" id="3.1.3.2"/>
    </reaction>
</comment>
<comment type="cofactor">
    <cofactor evidence="1">
        <name>Mg(2+)</name>
        <dbReference type="ChEBI" id="CHEBI:18420"/>
    </cofactor>
    <text evidence="1">Binds 1 Mg(2+) ion per subunit.</text>
</comment>
<comment type="activity regulation">
    <text evidence="2">Activated by ethanol. Also activated by Co(2+), Zn(2+) and glycerol. Inhibited by EDTA, inorganic phosphate, nucleosides and Ca(2+). Unaffected by fluoride and tartrate.</text>
</comment>
<comment type="biophysicochemical properties">
    <phDependence>
        <text evidence="2">Optimum pH is about 6 using pNPP as substrate. Retains more than 50% of maximal activity in the pH range 4-7.</text>
    </phDependence>
</comment>
<comment type="subunit">
    <text evidence="2">Homotetramer.</text>
</comment>
<comment type="subcellular location">
    <subcellularLocation>
        <location evidence="2">Periplasm</location>
    </subcellularLocation>
</comment>
<comment type="similarity">
    <text evidence="3">Belongs to the class B bacterial acid phosphatase family.</text>
</comment>
<keyword id="KW-0903">Direct protein sequencing</keyword>
<keyword id="KW-0378">Hydrolase</keyword>
<keyword id="KW-0460">Magnesium</keyword>
<keyword id="KW-0479">Metal-binding</keyword>
<keyword id="KW-0574">Periplasm</keyword>
<keyword id="KW-0732">Signal</keyword>